<organism>
    <name type="scientific">Thiobacillus denitrificans (strain ATCC 25259 / T1)</name>
    <dbReference type="NCBI Taxonomy" id="292415"/>
    <lineage>
        <taxon>Bacteria</taxon>
        <taxon>Pseudomonadati</taxon>
        <taxon>Pseudomonadota</taxon>
        <taxon>Betaproteobacteria</taxon>
        <taxon>Nitrosomonadales</taxon>
        <taxon>Thiobacillaceae</taxon>
        <taxon>Thiobacillus</taxon>
    </lineage>
</organism>
<dbReference type="EC" id="3.2.2.23" evidence="2"/>
<dbReference type="EC" id="4.2.99.18" evidence="2"/>
<dbReference type="EMBL" id="CP000116">
    <property type="protein sequence ID" value="AAZ96336.1"/>
    <property type="molecule type" value="Genomic_DNA"/>
</dbReference>
<dbReference type="RefSeq" id="WP_011310896.1">
    <property type="nucleotide sequence ID" value="NC_007404.1"/>
</dbReference>
<dbReference type="SMR" id="Q3SLR9"/>
<dbReference type="STRING" id="292415.Tbd_0383"/>
<dbReference type="KEGG" id="tbd:Tbd_0383"/>
<dbReference type="eggNOG" id="COG0266">
    <property type="taxonomic scope" value="Bacteria"/>
</dbReference>
<dbReference type="HOGENOM" id="CLU_038423_1_1_4"/>
<dbReference type="OrthoDB" id="9800855at2"/>
<dbReference type="Proteomes" id="UP000008291">
    <property type="component" value="Chromosome"/>
</dbReference>
<dbReference type="GO" id="GO:0034039">
    <property type="term" value="F:8-oxo-7,8-dihydroguanine DNA N-glycosylase activity"/>
    <property type="evidence" value="ECO:0007669"/>
    <property type="project" value="TreeGrafter"/>
</dbReference>
<dbReference type="GO" id="GO:0140078">
    <property type="term" value="F:class I DNA-(apurinic or apyrimidinic site) endonuclease activity"/>
    <property type="evidence" value="ECO:0007669"/>
    <property type="project" value="UniProtKB-EC"/>
</dbReference>
<dbReference type="GO" id="GO:0003684">
    <property type="term" value="F:damaged DNA binding"/>
    <property type="evidence" value="ECO:0007669"/>
    <property type="project" value="InterPro"/>
</dbReference>
<dbReference type="GO" id="GO:0008270">
    <property type="term" value="F:zinc ion binding"/>
    <property type="evidence" value="ECO:0007669"/>
    <property type="project" value="UniProtKB-UniRule"/>
</dbReference>
<dbReference type="GO" id="GO:0006284">
    <property type="term" value="P:base-excision repair"/>
    <property type="evidence" value="ECO:0007669"/>
    <property type="project" value="InterPro"/>
</dbReference>
<dbReference type="CDD" id="cd08966">
    <property type="entry name" value="EcFpg-like_N"/>
    <property type="match status" value="1"/>
</dbReference>
<dbReference type="FunFam" id="1.10.8.50:FF:000003">
    <property type="entry name" value="Formamidopyrimidine-DNA glycosylase"/>
    <property type="match status" value="1"/>
</dbReference>
<dbReference type="FunFam" id="3.20.190.10:FF:000001">
    <property type="entry name" value="Formamidopyrimidine-DNA glycosylase"/>
    <property type="match status" value="1"/>
</dbReference>
<dbReference type="Gene3D" id="1.10.8.50">
    <property type="match status" value="1"/>
</dbReference>
<dbReference type="Gene3D" id="3.20.190.10">
    <property type="entry name" value="MutM-like, N-terminal"/>
    <property type="match status" value="1"/>
</dbReference>
<dbReference type="HAMAP" id="MF_00103">
    <property type="entry name" value="Fapy_DNA_glycosyl"/>
    <property type="match status" value="1"/>
</dbReference>
<dbReference type="InterPro" id="IPR015886">
    <property type="entry name" value="DNA_glyclase/AP_lyase_DNA-bd"/>
</dbReference>
<dbReference type="InterPro" id="IPR015887">
    <property type="entry name" value="DNA_glyclase_Znf_dom_DNA_BS"/>
</dbReference>
<dbReference type="InterPro" id="IPR020629">
    <property type="entry name" value="Formamido-pyr_DNA_Glyclase"/>
</dbReference>
<dbReference type="InterPro" id="IPR012319">
    <property type="entry name" value="FPG_cat"/>
</dbReference>
<dbReference type="InterPro" id="IPR035937">
    <property type="entry name" value="MutM-like_N-ter"/>
</dbReference>
<dbReference type="InterPro" id="IPR010979">
    <property type="entry name" value="Ribosomal_uS13-like_H2TH"/>
</dbReference>
<dbReference type="InterPro" id="IPR000214">
    <property type="entry name" value="Znf_DNA_glyclase/AP_lyase"/>
</dbReference>
<dbReference type="InterPro" id="IPR010663">
    <property type="entry name" value="Znf_FPG/IleRS"/>
</dbReference>
<dbReference type="NCBIfam" id="TIGR00577">
    <property type="entry name" value="fpg"/>
    <property type="match status" value="1"/>
</dbReference>
<dbReference type="NCBIfam" id="NF002211">
    <property type="entry name" value="PRK01103.1"/>
    <property type="match status" value="1"/>
</dbReference>
<dbReference type="PANTHER" id="PTHR22993">
    <property type="entry name" value="FORMAMIDOPYRIMIDINE-DNA GLYCOSYLASE"/>
    <property type="match status" value="1"/>
</dbReference>
<dbReference type="PANTHER" id="PTHR22993:SF9">
    <property type="entry name" value="FORMAMIDOPYRIMIDINE-DNA GLYCOSYLASE"/>
    <property type="match status" value="1"/>
</dbReference>
<dbReference type="Pfam" id="PF01149">
    <property type="entry name" value="Fapy_DNA_glyco"/>
    <property type="match status" value="1"/>
</dbReference>
<dbReference type="Pfam" id="PF06831">
    <property type="entry name" value="H2TH"/>
    <property type="match status" value="1"/>
</dbReference>
<dbReference type="Pfam" id="PF06827">
    <property type="entry name" value="zf-FPG_IleRS"/>
    <property type="match status" value="1"/>
</dbReference>
<dbReference type="SMART" id="SM00898">
    <property type="entry name" value="Fapy_DNA_glyco"/>
    <property type="match status" value="1"/>
</dbReference>
<dbReference type="SMART" id="SM01232">
    <property type="entry name" value="H2TH"/>
    <property type="match status" value="1"/>
</dbReference>
<dbReference type="SUPFAM" id="SSF57716">
    <property type="entry name" value="Glucocorticoid receptor-like (DNA-binding domain)"/>
    <property type="match status" value="1"/>
</dbReference>
<dbReference type="SUPFAM" id="SSF81624">
    <property type="entry name" value="N-terminal domain of MutM-like DNA repair proteins"/>
    <property type="match status" value="1"/>
</dbReference>
<dbReference type="SUPFAM" id="SSF46946">
    <property type="entry name" value="S13-like H2TH domain"/>
    <property type="match status" value="1"/>
</dbReference>
<dbReference type="PROSITE" id="PS51068">
    <property type="entry name" value="FPG_CAT"/>
    <property type="match status" value="1"/>
</dbReference>
<dbReference type="PROSITE" id="PS01242">
    <property type="entry name" value="ZF_FPG_1"/>
    <property type="match status" value="1"/>
</dbReference>
<dbReference type="PROSITE" id="PS51066">
    <property type="entry name" value="ZF_FPG_2"/>
    <property type="match status" value="1"/>
</dbReference>
<gene>
    <name evidence="2" type="primary">mutM</name>
    <name evidence="2" type="synonym">fpg</name>
    <name type="ordered locus">Tbd_0383</name>
</gene>
<proteinExistence type="inferred from homology"/>
<evidence type="ECO:0000250" key="1"/>
<evidence type="ECO:0000255" key="2">
    <source>
        <dbReference type="HAMAP-Rule" id="MF_00103"/>
    </source>
</evidence>
<accession>Q3SLR9</accession>
<name>FPG_THIDA</name>
<feature type="initiator methionine" description="Removed" evidence="1">
    <location>
        <position position="1"/>
    </location>
</feature>
<feature type="chain" id="PRO_0000228480" description="Formamidopyrimidine-DNA glycosylase">
    <location>
        <begin position="2"/>
        <end position="270"/>
    </location>
</feature>
<feature type="zinc finger region" description="FPG-type" evidence="2">
    <location>
        <begin position="236"/>
        <end position="270"/>
    </location>
</feature>
<feature type="active site" description="Schiff-base intermediate with DNA" evidence="2">
    <location>
        <position position="2"/>
    </location>
</feature>
<feature type="active site" description="Proton donor" evidence="2">
    <location>
        <position position="3"/>
    </location>
</feature>
<feature type="active site" description="Proton donor; for beta-elimination activity" evidence="2">
    <location>
        <position position="58"/>
    </location>
</feature>
<feature type="active site" description="Proton donor; for delta-elimination activity" evidence="2">
    <location>
        <position position="260"/>
    </location>
</feature>
<feature type="binding site" evidence="2">
    <location>
        <position position="91"/>
    </location>
    <ligand>
        <name>DNA</name>
        <dbReference type="ChEBI" id="CHEBI:16991"/>
    </ligand>
</feature>
<feature type="binding site" evidence="2">
    <location>
        <position position="110"/>
    </location>
    <ligand>
        <name>DNA</name>
        <dbReference type="ChEBI" id="CHEBI:16991"/>
    </ligand>
</feature>
<feature type="binding site" evidence="2">
    <location>
        <position position="151"/>
    </location>
    <ligand>
        <name>DNA</name>
        <dbReference type="ChEBI" id="CHEBI:16991"/>
    </ligand>
</feature>
<reference key="1">
    <citation type="journal article" date="2006" name="J. Bacteriol.">
        <title>The genome sequence of the obligately chemolithoautotrophic, facultatively anaerobic bacterium Thiobacillus denitrificans.</title>
        <authorList>
            <person name="Beller H.R."/>
            <person name="Chain P.S."/>
            <person name="Letain T.E."/>
            <person name="Chakicherla A."/>
            <person name="Larimer F.W."/>
            <person name="Richardson P.M."/>
            <person name="Coleman M.A."/>
            <person name="Wood A.P."/>
            <person name="Kelly D.P."/>
        </authorList>
    </citation>
    <scope>NUCLEOTIDE SEQUENCE [LARGE SCALE GENOMIC DNA]</scope>
    <source>
        <strain>ATCC 25259 / T1</strain>
    </source>
</reference>
<protein>
    <recommendedName>
        <fullName evidence="2">Formamidopyrimidine-DNA glycosylase</fullName>
        <shortName evidence="2">Fapy-DNA glycosylase</shortName>
        <ecNumber evidence="2">3.2.2.23</ecNumber>
    </recommendedName>
    <alternativeName>
        <fullName evidence="2">DNA-(apurinic or apyrimidinic site) lyase MutM</fullName>
        <shortName evidence="2">AP lyase MutM</shortName>
        <ecNumber evidence="2">4.2.99.18</ecNumber>
    </alternativeName>
</protein>
<sequence>MPELPEVETTRAGLSPRLQGRVLTRVIVREPRLRWPIPPDLDTQLRGLTLHGLARRGKYLLFDFGAVTQLVHLGMSGSLRLTEPAEPAARHDHVDWRFDDGTILRLRDPRRFGAVLLTENAPGHPLLAGLGPEPLSTAFDAAYLHTQCQRRKTAIKPLIMDAHVVVGVGNIYASESLFHAGIRPGVAAHRLSRAACARLADAIKQVLTAAIAAGGSSLRDYVQSSGELGYFQLQTRVYDREDAPCRRCATPIRRIVQAQRASFYCPTCQR</sequence>
<keyword id="KW-0227">DNA damage</keyword>
<keyword id="KW-0234">DNA repair</keyword>
<keyword id="KW-0238">DNA-binding</keyword>
<keyword id="KW-0326">Glycosidase</keyword>
<keyword id="KW-0378">Hydrolase</keyword>
<keyword id="KW-0456">Lyase</keyword>
<keyword id="KW-0479">Metal-binding</keyword>
<keyword id="KW-0511">Multifunctional enzyme</keyword>
<keyword id="KW-1185">Reference proteome</keyword>
<keyword id="KW-0862">Zinc</keyword>
<keyword id="KW-0863">Zinc-finger</keyword>
<comment type="function">
    <text evidence="2">Involved in base excision repair of DNA damaged by oxidation or by mutagenic agents. Acts as a DNA glycosylase that recognizes and removes damaged bases. Has a preference for oxidized purines, such as 7,8-dihydro-8-oxoguanine (8-oxoG). Has AP (apurinic/apyrimidinic) lyase activity and introduces nicks in the DNA strand. Cleaves the DNA backbone by beta-delta elimination to generate a single-strand break at the site of the removed base with both 3'- and 5'-phosphates.</text>
</comment>
<comment type="catalytic activity">
    <reaction evidence="2">
        <text>Hydrolysis of DNA containing ring-opened 7-methylguanine residues, releasing 2,6-diamino-4-hydroxy-5-(N-methyl)formamidopyrimidine.</text>
        <dbReference type="EC" id="3.2.2.23"/>
    </reaction>
</comment>
<comment type="catalytic activity">
    <reaction evidence="2">
        <text>2'-deoxyribonucleotide-(2'-deoxyribose 5'-phosphate)-2'-deoxyribonucleotide-DNA = a 3'-end 2'-deoxyribonucleotide-(2,3-dehydro-2,3-deoxyribose 5'-phosphate)-DNA + a 5'-end 5'-phospho-2'-deoxyribonucleoside-DNA + H(+)</text>
        <dbReference type="Rhea" id="RHEA:66592"/>
        <dbReference type="Rhea" id="RHEA-COMP:13180"/>
        <dbReference type="Rhea" id="RHEA-COMP:16897"/>
        <dbReference type="Rhea" id="RHEA-COMP:17067"/>
        <dbReference type="ChEBI" id="CHEBI:15378"/>
        <dbReference type="ChEBI" id="CHEBI:136412"/>
        <dbReference type="ChEBI" id="CHEBI:157695"/>
        <dbReference type="ChEBI" id="CHEBI:167181"/>
        <dbReference type="EC" id="4.2.99.18"/>
    </reaction>
</comment>
<comment type="cofactor">
    <cofactor evidence="2">
        <name>Zn(2+)</name>
        <dbReference type="ChEBI" id="CHEBI:29105"/>
    </cofactor>
    <text evidence="2">Binds 1 zinc ion per subunit.</text>
</comment>
<comment type="subunit">
    <text evidence="2">Monomer.</text>
</comment>
<comment type="similarity">
    <text evidence="2">Belongs to the FPG family.</text>
</comment>